<accession>A1WL04</accession>
<organism>
    <name type="scientific">Verminephrobacter eiseniae (strain EF01-2)</name>
    <dbReference type="NCBI Taxonomy" id="391735"/>
    <lineage>
        <taxon>Bacteria</taxon>
        <taxon>Pseudomonadati</taxon>
        <taxon>Pseudomonadota</taxon>
        <taxon>Betaproteobacteria</taxon>
        <taxon>Burkholderiales</taxon>
        <taxon>Comamonadaceae</taxon>
        <taxon>Verminephrobacter</taxon>
    </lineage>
</organism>
<dbReference type="EMBL" id="CP000542">
    <property type="protein sequence ID" value="ABM58311.1"/>
    <property type="molecule type" value="Genomic_DNA"/>
</dbReference>
<dbReference type="RefSeq" id="WP_011810312.1">
    <property type="nucleotide sequence ID" value="NC_008786.1"/>
</dbReference>
<dbReference type="SMR" id="A1WL04"/>
<dbReference type="STRING" id="391735.Veis_2566"/>
<dbReference type="GeneID" id="76461094"/>
<dbReference type="KEGG" id="vei:Veis_2566"/>
<dbReference type="eggNOG" id="COG0234">
    <property type="taxonomic scope" value="Bacteria"/>
</dbReference>
<dbReference type="HOGENOM" id="CLU_132825_0_0_4"/>
<dbReference type="OrthoDB" id="9806791at2"/>
<dbReference type="Proteomes" id="UP000000374">
    <property type="component" value="Chromosome"/>
</dbReference>
<dbReference type="GO" id="GO:0005737">
    <property type="term" value="C:cytoplasm"/>
    <property type="evidence" value="ECO:0007669"/>
    <property type="project" value="UniProtKB-SubCell"/>
</dbReference>
<dbReference type="GO" id="GO:0005524">
    <property type="term" value="F:ATP binding"/>
    <property type="evidence" value="ECO:0007669"/>
    <property type="project" value="InterPro"/>
</dbReference>
<dbReference type="GO" id="GO:0046872">
    <property type="term" value="F:metal ion binding"/>
    <property type="evidence" value="ECO:0007669"/>
    <property type="project" value="TreeGrafter"/>
</dbReference>
<dbReference type="GO" id="GO:0044183">
    <property type="term" value="F:protein folding chaperone"/>
    <property type="evidence" value="ECO:0007669"/>
    <property type="project" value="InterPro"/>
</dbReference>
<dbReference type="GO" id="GO:0051087">
    <property type="term" value="F:protein-folding chaperone binding"/>
    <property type="evidence" value="ECO:0007669"/>
    <property type="project" value="TreeGrafter"/>
</dbReference>
<dbReference type="GO" id="GO:0051082">
    <property type="term" value="F:unfolded protein binding"/>
    <property type="evidence" value="ECO:0007669"/>
    <property type="project" value="TreeGrafter"/>
</dbReference>
<dbReference type="GO" id="GO:0051085">
    <property type="term" value="P:chaperone cofactor-dependent protein refolding"/>
    <property type="evidence" value="ECO:0007669"/>
    <property type="project" value="TreeGrafter"/>
</dbReference>
<dbReference type="CDD" id="cd00320">
    <property type="entry name" value="cpn10"/>
    <property type="match status" value="1"/>
</dbReference>
<dbReference type="FunFam" id="2.30.33.40:FF:000001">
    <property type="entry name" value="10 kDa chaperonin"/>
    <property type="match status" value="1"/>
</dbReference>
<dbReference type="Gene3D" id="2.30.33.40">
    <property type="entry name" value="GroES chaperonin"/>
    <property type="match status" value="1"/>
</dbReference>
<dbReference type="HAMAP" id="MF_00580">
    <property type="entry name" value="CH10"/>
    <property type="match status" value="1"/>
</dbReference>
<dbReference type="InterPro" id="IPR020818">
    <property type="entry name" value="Chaperonin_GroES"/>
</dbReference>
<dbReference type="InterPro" id="IPR037124">
    <property type="entry name" value="Chaperonin_GroES_sf"/>
</dbReference>
<dbReference type="InterPro" id="IPR018369">
    <property type="entry name" value="Chaprnonin_Cpn10_CS"/>
</dbReference>
<dbReference type="InterPro" id="IPR011032">
    <property type="entry name" value="GroES-like_sf"/>
</dbReference>
<dbReference type="NCBIfam" id="NF001527">
    <property type="entry name" value="PRK00364.1-2"/>
    <property type="match status" value="1"/>
</dbReference>
<dbReference type="NCBIfam" id="NF001529">
    <property type="entry name" value="PRK00364.1-5"/>
    <property type="match status" value="1"/>
</dbReference>
<dbReference type="NCBIfam" id="NF001531">
    <property type="entry name" value="PRK00364.2-2"/>
    <property type="match status" value="1"/>
</dbReference>
<dbReference type="NCBIfam" id="NF001533">
    <property type="entry name" value="PRK00364.2-4"/>
    <property type="match status" value="1"/>
</dbReference>
<dbReference type="PANTHER" id="PTHR10772">
    <property type="entry name" value="10 KDA HEAT SHOCK PROTEIN"/>
    <property type="match status" value="1"/>
</dbReference>
<dbReference type="PANTHER" id="PTHR10772:SF58">
    <property type="entry name" value="CO-CHAPERONIN GROES"/>
    <property type="match status" value="1"/>
</dbReference>
<dbReference type="Pfam" id="PF00166">
    <property type="entry name" value="Cpn10"/>
    <property type="match status" value="1"/>
</dbReference>
<dbReference type="PRINTS" id="PR00297">
    <property type="entry name" value="CHAPERONIN10"/>
</dbReference>
<dbReference type="SMART" id="SM00883">
    <property type="entry name" value="Cpn10"/>
    <property type="match status" value="1"/>
</dbReference>
<dbReference type="SUPFAM" id="SSF50129">
    <property type="entry name" value="GroES-like"/>
    <property type="match status" value="1"/>
</dbReference>
<dbReference type="PROSITE" id="PS00681">
    <property type="entry name" value="CHAPERONINS_CPN10"/>
    <property type="match status" value="1"/>
</dbReference>
<reference key="1">
    <citation type="submission" date="2006-12" db="EMBL/GenBank/DDBJ databases">
        <title>Complete sequence of chromosome 1 of Verminephrobacter eiseniae EF01-2.</title>
        <authorList>
            <person name="Copeland A."/>
            <person name="Lucas S."/>
            <person name="Lapidus A."/>
            <person name="Barry K."/>
            <person name="Detter J.C."/>
            <person name="Glavina del Rio T."/>
            <person name="Dalin E."/>
            <person name="Tice H."/>
            <person name="Pitluck S."/>
            <person name="Chertkov O."/>
            <person name="Brettin T."/>
            <person name="Bruce D."/>
            <person name="Han C."/>
            <person name="Tapia R."/>
            <person name="Gilna P."/>
            <person name="Schmutz J."/>
            <person name="Larimer F."/>
            <person name="Land M."/>
            <person name="Hauser L."/>
            <person name="Kyrpides N."/>
            <person name="Kim E."/>
            <person name="Stahl D."/>
            <person name="Richardson P."/>
        </authorList>
    </citation>
    <scope>NUCLEOTIDE SEQUENCE [LARGE SCALE GENOMIC DNA]</scope>
    <source>
        <strain>EF01-2</strain>
    </source>
</reference>
<feature type="chain" id="PRO_1000025398" description="Co-chaperonin GroES">
    <location>
        <begin position="1"/>
        <end position="96"/>
    </location>
</feature>
<sequence>MNLRPLHDRVIVKRIESETTTASGIVIPDNAAEKPDQGEVLAVGPGKKNDKGELIALNVKVGDRVLFGKYSGQTVKVHRDELLVMKEDDLFAVVEK</sequence>
<protein>
    <recommendedName>
        <fullName evidence="1">Co-chaperonin GroES</fullName>
    </recommendedName>
    <alternativeName>
        <fullName evidence="1">10 kDa chaperonin</fullName>
    </alternativeName>
    <alternativeName>
        <fullName evidence="1">Chaperonin-10</fullName>
        <shortName evidence="1">Cpn10</shortName>
    </alternativeName>
</protein>
<name>CH10_VEREI</name>
<keyword id="KW-0143">Chaperone</keyword>
<keyword id="KW-0963">Cytoplasm</keyword>
<keyword id="KW-1185">Reference proteome</keyword>
<proteinExistence type="inferred from homology"/>
<evidence type="ECO:0000255" key="1">
    <source>
        <dbReference type="HAMAP-Rule" id="MF_00580"/>
    </source>
</evidence>
<gene>
    <name evidence="1" type="primary">groES</name>
    <name evidence="1" type="synonym">groS</name>
    <name type="ordered locus">Veis_2566</name>
</gene>
<comment type="function">
    <text evidence="1">Together with the chaperonin GroEL, plays an essential role in assisting protein folding. The GroEL-GroES system forms a nano-cage that allows encapsulation of the non-native substrate proteins and provides a physical environment optimized to promote and accelerate protein folding. GroES binds to the apical surface of the GroEL ring, thereby capping the opening of the GroEL channel.</text>
</comment>
<comment type="subunit">
    <text evidence="1">Heptamer of 7 subunits arranged in a ring. Interacts with the chaperonin GroEL.</text>
</comment>
<comment type="subcellular location">
    <subcellularLocation>
        <location evidence="1">Cytoplasm</location>
    </subcellularLocation>
</comment>
<comment type="similarity">
    <text evidence="1">Belongs to the GroES chaperonin family.</text>
</comment>